<feature type="chain" id="PRO_0000357755" description="NADH-quinone oxidoreductase subunit D 2">
    <location>
        <begin position="1"/>
        <end position="379"/>
    </location>
</feature>
<name>NUOD2_ANADE</name>
<dbReference type="EC" id="7.1.1.-" evidence="1"/>
<dbReference type="EMBL" id="CP000251">
    <property type="protein sequence ID" value="ABC82344.1"/>
    <property type="molecule type" value="Genomic_DNA"/>
</dbReference>
<dbReference type="RefSeq" id="WP_011421626.1">
    <property type="nucleotide sequence ID" value="NC_007760.1"/>
</dbReference>
<dbReference type="SMR" id="Q2IL16"/>
<dbReference type="STRING" id="290397.Adeh_2574"/>
<dbReference type="KEGG" id="ade:Adeh_2574"/>
<dbReference type="eggNOG" id="COG0649">
    <property type="taxonomic scope" value="Bacteria"/>
</dbReference>
<dbReference type="HOGENOM" id="CLU_015134_1_2_7"/>
<dbReference type="OrthoDB" id="9801496at2"/>
<dbReference type="Proteomes" id="UP000001935">
    <property type="component" value="Chromosome"/>
</dbReference>
<dbReference type="GO" id="GO:0005886">
    <property type="term" value="C:plasma membrane"/>
    <property type="evidence" value="ECO:0007669"/>
    <property type="project" value="UniProtKB-SubCell"/>
</dbReference>
<dbReference type="GO" id="GO:0051287">
    <property type="term" value="F:NAD binding"/>
    <property type="evidence" value="ECO:0007669"/>
    <property type="project" value="InterPro"/>
</dbReference>
<dbReference type="GO" id="GO:0050136">
    <property type="term" value="F:NADH:ubiquinone reductase (non-electrogenic) activity"/>
    <property type="evidence" value="ECO:0007669"/>
    <property type="project" value="UniProtKB-UniRule"/>
</dbReference>
<dbReference type="GO" id="GO:0048038">
    <property type="term" value="F:quinone binding"/>
    <property type="evidence" value="ECO:0007669"/>
    <property type="project" value="UniProtKB-KW"/>
</dbReference>
<dbReference type="Gene3D" id="1.10.645.10">
    <property type="entry name" value="Cytochrome-c3 Hydrogenase, chain B"/>
    <property type="match status" value="1"/>
</dbReference>
<dbReference type="HAMAP" id="MF_01358">
    <property type="entry name" value="NDH1_NuoD"/>
    <property type="match status" value="1"/>
</dbReference>
<dbReference type="InterPro" id="IPR001135">
    <property type="entry name" value="NADH_Q_OxRdtase_suD"/>
</dbReference>
<dbReference type="InterPro" id="IPR022885">
    <property type="entry name" value="NDH1_su_D/H"/>
</dbReference>
<dbReference type="InterPro" id="IPR029014">
    <property type="entry name" value="NiFe-Hase_large"/>
</dbReference>
<dbReference type="PANTHER" id="PTHR11993:SF10">
    <property type="entry name" value="NADH DEHYDROGENASE [UBIQUINONE] IRON-SULFUR PROTEIN 2, MITOCHONDRIAL"/>
    <property type="match status" value="1"/>
</dbReference>
<dbReference type="PANTHER" id="PTHR11993">
    <property type="entry name" value="NADH-UBIQUINONE OXIDOREDUCTASE 49 KDA SUBUNIT"/>
    <property type="match status" value="1"/>
</dbReference>
<dbReference type="Pfam" id="PF00346">
    <property type="entry name" value="Complex1_49kDa"/>
    <property type="match status" value="2"/>
</dbReference>
<dbReference type="SUPFAM" id="SSF56762">
    <property type="entry name" value="HydB/Nqo4-like"/>
    <property type="match status" value="1"/>
</dbReference>
<evidence type="ECO:0000255" key="1">
    <source>
        <dbReference type="HAMAP-Rule" id="MF_01358"/>
    </source>
</evidence>
<keyword id="KW-0997">Cell inner membrane</keyword>
<keyword id="KW-1003">Cell membrane</keyword>
<keyword id="KW-0472">Membrane</keyword>
<keyword id="KW-0520">NAD</keyword>
<keyword id="KW-0874">Quinone</keyword>
<keyword id="KW-1185">Reference proteome</keyword>
<keyword id="KW-1278">Translocase</keyword>
<keyword id="KW-0813">Transport</keyword>
<keyword id="KW-0830">Ubiquinone</keyword>
<accession>Q2IL16</accession>
<organism>
    <name type="scientific">Anaeromyxobacter dehalogenans (strain 2CP-C)</name>
    <dbReference type="NCBI Taxonomy" id="290397"/>
    <lineage>
        <taxon>Bacteria</taxon>
        <taxon>Pseudomonadati</taxon>
        <taxon>Myxococcota</taxon>
        <taxon>Myxococcia</taxon>
        <taxon>Myxococcales</taxon>
        <taxon>Cystobacterineae</taxon>
        <taxon>Anaeromyxobacteraceae</taxon>
        <taxon>Anaeromyxobacter</taxon>
    </lineage>
</organism>
<sequence length="379" mass="42443">MEKLILRRVDRQNEEMILNFGPQHPSTHGVINFLVETDGEVLKRATPDVGYLHRSIEKIGELVGYPGFMPYTDRVDYVAAMFANEGYAIAVERLLKIEVPQRAQWLRAISCELCRIASHLVSVGTMVMDIGAFTPMLHGIRERETINDLLEALCGARLTYNYHRIGGVAFDLPEGWRDKVLHFLDHFDKFLAEFDRLISFNEIYVKRLANVAVIPGPMAINYGLVGPNLRGSGVDWDVRRDLPYGAYPNFKFDVPVGKGFFGTAGDSFDRYYVRCLEMAESSKIVRQALDSLPEGEITAKVPRNIKPEAGEALGRVESARGELAYYVISDGTNKAYRVRARTGSFTAMCIIEDISRGLMVADLVALISSLDVVAPEIDR</sequence>
<protein>
    <recommendedName>
        <fullName evidence="1">NADH-quinone oxidoreductase subunit D 2</fullName>
        <ecNumber evidence="1">7.1.1.-</ecNumber>
    </recommendedName>
    <alternativeName>
        <fullName evidence="1">NADH dehydrogenase I subunit D 2</fullName>
    </alternativeName>
    <alternativeName>
        <fullName evidence="1">NDH-1 subunit D 2</fullName>
    </alternativeName>
</protein>
<comment type="function">
    <text evidence="1">NDH-1 shuttles electrons from NADH, via FMN and iron-sulfur (Fe-S) centers, to quinones in the respiratory chain. The immediate electron acceptor for the enzyme in this species is believed to be ubiquinone. Couples the redox reaction to proton translocation (for every two electrons transferred, four hydrogen ions are translocated across the cytoplasmic membrane), and thus conserves the redox energy in a proton gradient.</text>
</comment>
<comment type="catalytic activity">
    <reaction evidence="1">
        <text>a quinone + NADH + 5 H(+)(in) = a quinol + NAD(+) + 4 H(+)(out)</text>
        <dbReference type="Rhea" id="RHEA:57888"/>
        <dbReference type="ChEBI" id="CHEBI:15378"/>
        <dbReference type="ChEBI" id="CHEBI:24646"/>
        <dbReference type="ChEBI" id="CHEBI:57540"/>
        <dbReference type="ChEBI" id="CHEBI:57945"/>
        <dbReference type="ChEBI" id="CHEBI:132124"/>
    </reaction>
</comment>
<comment type="subunit">
    <text evidence="1">NDH-1 is composed of 14 different subunits. Subunits NuoB, C, D, E, F, and G constitute the peripheral sector of the complex.</text>
</comment>
<comment type="subcellular location">
    <subcellularLocation>
        <location evidence="1">Cell inner membrane</location>
        <topology evidence="1">Peripheral membrane protein</topology>
        <orientation evidence="1">Cytoplasmic side</orientation>
    </subcellularLocation>
</comment>
<comment type="similarity">
    <text evidence="1">Belongs to the complex I 49 kDa subunit family.</text>
</comment>
<reference key="1">
    <citation type="submission" date="2006-01" db="EMBL/GenBank/DDBJ databases">
        <title>Complete sequence of Anaeromyxobacter dehalogenans 2CP-C.</title>
        <authorList>
            <person name="Copeland A."/>
            <person name="Lucas S."/>
            <person name="Lapidus A."/>
            <person name="Barry K."/>
            <person name="Detter J.C."/>
            <person name="Glavina T."/>
            <person name="Hammon N."/>
            <person name="Israni S."/>
            <person name="Pitluck S."/>
            <person name="Brettin T."/>
            <person name="Bruce D."/>
            <person name="Han C."/>
            <person name="Tapia R."/>
            <person name="Gilna P."/>
            <person name="Kiss H."/>
            <person name="Schmutz J."/>
            <person name="Larimer F."/>
            <person name="Land M."/>
            <person name="Kyrpides N."/>
            <person name="Anderson I."/>
            <person name="Sanford R.A."/>
            <person name="Ritalahti K.M."/>
            <person name="Thomas H.S."/>
            <person name="Kirby J.R."/>
            <person name="Zhulin I.B."/>
            <person name="Loeffler F.E."/>
            <person name="Richardson P."/>
        </authorList>
    </citation>
    <scope>NUCLEOTIDE SEQUENCE [LARGE SCALE GENOMIC DNA]</scope>
    <source>
        <strain>2CP-C</strain>
    </source>
</reference>
<proteinExistence type="inferred from homology"/>
<gene>
    <name evidence="1" type="primary">nuoD2</name>
    <name type="ordered locus">Adeh_2574</name>
</gene>